<accession>D2Y2N0</accession>
<sequence>MVNVKASMFLTFAGLVLLFVVCYASESEEKEFPKEMLSSIFAVDNDFKQEERDCAGYMRECKEKLCCSGYVCSSRWKWCVLPAPWRR</sequence>
<name>H8A17_CYRHA</name>
<comment type="function">
    <text evidence="1">Ion channel inhibitor.</text>
</comment>
<comment type="subcellular location">
    <subcellularLocation>
        <location>Secreted</location>
    </subcellularLocation>
</comment>
<comment type="tissue specificity">
    <text>Expressed by the venom gland.</text>
</comment>
<comment type="domain">
    <text evidence="1">The presence of a 'disulfide through disulfide knot' structurally defines this protein as a knottin.</text>
</comment>
<comment type="similarity">
    <text evidence="5">Belongs to the neurotoxin 10 (Hwtx-1) family. 51 (Hntx-8) subfamily. Hntx-8 sub-subfamily.</text>
</comment>
<keyword id="KW-0903">Direct protein sequencing</keyword>
<keyword id="KW-1015">Disulfide bond</keyword>
<keyword id="KW-0872">Ion channel impairing toxin</keyword>
<keyword id="KW-0960">Knottin</keyword>
<keyword id="KW-0964">Secreted</keyword>
<keyword id="KW-0732">Signal</keyword>
<keyword id="KW-0800">Toxin</keyword>
<organism>
    <name type="scientific">Cyriopagopus hainanus</name>
    <name type="common">Chinese bird spider</name>
    <name type="synonym">Haplopelma hainanum</name>
    <dbReference type="NCBI Taxonomy" id="209901"/>
    <lineage>
        <taxon>Eukaryota</taxon>
        <taxon>Metazoa</taxon>
        <taxon>Ecdysozoa</taxon>
        <taxon>Arthropoda</taxon>
        <taxon>Chelicerata</taxon>
        <taxon>Arachnida</taxon>
        <taxon>Araneae</taxon>
        <taxon>Mygalomorphae</taxon>
        <taxon>Theraphosidae</taxon>
        <taxon>Haplopelma</taxon>
    </lineage>
</organism>
<reference key="1">
    <citation type="journal article" date="2010" name="J. Proteome Res.">
        <title>Molecular diversification of peptide toxins from the tarantula Haplopelma hainanum (Ornithoctonus hainana) venom based on transcriptomic, peptidomic, and genomic analyses.</title>
        <authorList>
            <person name="Tang X."/>
            <person name="Zhang Y."/>
            <person name="Hu W."/>
            <person name="Xu D."/>
            <person name="Tao H."/>
            <person name="Yang X."/>
            <person name="Li Y."/>
            <person name="Jiang L."/>
            <person name="Liang S."/>
        </authorList>
    </citation>
    <scope>NUCLEOTIDE SEQUENCE [LARGE SCALE GENOMIC DNA]</scope>
    <scope>PROTEIN SEQUENCE OF 53-85</scope>
    <scope>IDENTIFICATION BY MASS SPECTROMETRY</scope>
    <source>
        <tissue>Venom</tissue>
        <tissue>Venom gland</tissue>
    </source>
</reference>
<protein>
    <recommendedName>
        <fullName>U3-theraphotoxin-Hhn1a 17</fullName>
        <shortName>U3-TRTX-Hhn1a</shortName>
    </recommendedName>
    <alternativeName>
        <fullName>Hainantoxin-VIII.17</fullName>
        <shortName>HNTX-VIII.17</shortName>
    </alternativeName>
    <alternativeName>
        <fullName>Peptide F4-27.90</fullName>
    </alternativeName>
</protein>
<feature type="signal peptide" evidence="3">
    <location>
        <begin position="1"/>
        <end position="24"/>
    </location>
</feature>
<feature type="propeptide" id="PRO_0000400611" evidence="4">
    <location>
        <begin position="25"/>
        <end position="52"/>
    </location>
</feature>
<feature type="peptide" id="PRO_0000400612" description="U3-theraphotoxin-Hhn1a 17">
    <location>
        <begin position="53"/>
        <end position="87"/>
    </location>
</feature>
<feature type="disulfide bond" evidence="2">
    <location>
        <begin position="54"/>
        <end position="67"/>
    </location>
</feature>
<feature type="disulfide bond" evidence="2">
    <location>
        <begin position="61"/>
        <end position="72"/>
    </location>
</feature>
<feature type="disulfide bond" evidence="2">
    <location>
        <begin position="66"/>
        <end position="79"/>
    </location>
</feature>
<proteinExistence type="evidence at protein level"/>
<evidence type="ECO:0000250" key="1"/>
<evidence type="ECO:0000250" key="2">
    <source>
        <dbReference type="UniProtKB" id="B3FIS6"/>
    </source>
</evidence>
<evidence type="ECO:0000255" key="3"/>
<evidence type="ECO:0000269" key="4">
    <source>
    </source>
</evidence>
<evidence type="ECO:0000305" key="5"/>
<dbReference type="EMBL" id="GU293107">
    <property type="protein sequence ID" value="ADB56923.1"/>
    <property type="molecule type" value="Genomic_DNA"/>
</dbReference>
<dbReference type="ArachnoServer" id="AS001657">
    <property type="toxin name" value="U3-theraphotoxin-Hhn1a"/>
</dbReference>
<dbReference type="GO" id="GO:0005576">
    <property type="term" value="C:extracellular region"/>
    <property type="evidence" value="ECO:0007669"/>
    <property type="project" value="UniProtKB-SubCell"/>
</dbReference>
<dbReference type="GO" id="GO:0008200">
    <property type="term" value="F:ion channel inhibitor activity"/>
    <property type="evidence" value="ECO:0007669"/>
    <property type="project" value="InterPro"/>
</dbReference>
<dbReference type="GO" id="GO:0090729">
    <property type="term" value="F:toxin activity"/>
    <property type="evidence" value="ECO:0007669"/>
    <property type="project" value="UniProtKB-KW"/>
</dbReference>
<dbReference type="InterPro" id="IPR011696">
    <property type="entry name" value="Huwentoxin-1"/>
</dbReference>
<dbReference type="InterPro" id="IPR013140">
    <property type="entry name" value="Huwentoxin_CS1"/>
</dbReference>
<dbReference type="Pfam" id="PF07740">
    <property type="entry name" value="Toxin_12"/>
    <property type="match status" value="1"/>
</dbReference>
<dbReference type="SUPFAM" id="SSF57059">
    <property type="entry name" value="omega toxin-like"/>
    <property type="match status" value="1"/>
</dbReference>
<dbReference type="PROSITE" id="PS60021">
    <property type="entry name" value="HWTX_1"/>
    <property type="match status" value="1"/>
</dbReference>